<proteinExistence type="inferred from homology"/>
<dbReference type="EMBL" id="AE005674">
    <property type="protein sequence ID" value="AAN44657.1"/>
    <property type="molecule type" value="Genomic_DNA"/>
</dbReference>
<dbReference type="EMBL" id="AE014073">
    <property type="protein sequence ID" value="AAP18471.1"/>
    <property type="molecule type" value="Genomic_DNA"/>
</dbReference>
<dbReference type="RefSeq" id="WP_001158034.1">
    <property type="nucleotide sequence ID" value="NZ_WPGW01000004.1"/>
</dbReference>
<dbReference type="SMR" id="P66819"/>
<dbReference type="STRING" id="198214.SF3190"/>
<dbReference type="PaxDb" id="198214-SF3190"/>
<dbReference type="GeneID" id="93778835"/>
<dbReference type="KEGG" id="sfl:SF3190"/>
<dbReference type="KEGG" id="sfx:S3407"/>
<dbReference type="PATRIC" id="fig|198214.7.peg.3789"/>
<dbReference type="HOGENOM" id="CLU_080999_3_1_6"/>
<dbReference type="Proteomes" id="UP000001006">
    <property type="component" value="Chromosome"/>
</dbReference>
<dbReference type="Proteomes" id="UP000002673">
    <property type="component" value="Chromosome"/>
</dbReference>
<dbReference type="GO" id="GO:0097367">
    <property type="term" value="F:carbohydrate derivative binding"/>
    <property type="evidence" value="ECO:0007669"/>
    <property type="project" value="InterPro"/>
</dbReference>
<dbReference type="GO" id="GO:1901135">
    <property type="term" value="P:carbohydrate derivative metabolic process"/>
    <property type="evidence" value="ECO:0007669"/>
    <property type="project" value="InterPro"/>
</dbReference>
<dbReference type="GO" id="GO:0006260">
    <property type="term" value="P:DNA replication"/>
    <property type="evidence" value="ECO:0007669"/>
    <property type="project" value="UniProtKB-UniRule"/>
</dbReference>
<dbReference type="CDD" id="cd05006">
    <property type="entry name" value="SIS_GmhA"/>
    <property type="match status" value="1"/>
</dbReference>
<dbReference type="FunFam" id="3.40.50.10490:FF:000006">
    <property type="entry name" value="DnaA initiator-associating protein DiaA"/>
    <property type="match status" value="1"/>
</dbReference>
<dbReference type="Gene3D" id="3.40.50.10490">
    <property type="entry name" value="Glucose-6-phosphate isomerase like protein, domain 1"/>
    <property type="match status" value="1"/>
</dbReference>
<dbReference type="HAMAP" id="MF_01157">
    <property type="entry name" value="SIS_DiaA"/>
    <property type="match status" value="1"/>
</dbReference>
<dbReference type="InterPro" id="IPR023070">
    <property type="entry name" value="DiaA"/>
</dbReference>
<dbReference type="InterPro" id="IPR035461">
    <property type="entry name" value="GmhA/DiaA"/>
</dbReference>
<dbReference type="InterPro" id="IPR001347">
    <property type="entry name" value="SIS_dom"/>
</dbReference>
<dbReference type="InterPro" id="IPR046348">
    <property type="entry name" value="SIS_dom_sf"/>
</dbReference>
<dbReference type="InterPro" id="IPR050099">
    <property type="entry name" value="SIS_GmhA/DiaA_subfam"/>
</dbReference>
<dbReference type="NCBIfam" id="NF008138">
    <property type="entry name" value="PRK10886.1"/>
    <property type="match status" value="1"/>
</dbReference>
<dbReference type="NCBIfam" id="NF010546">
    <property type="entry name" value="PRK13936.1"/>
    <property type="match status" value="1"/>
</dbReference>
<dbReference type="PANTHER" id="PTHR30390:SF6">
    <property type="entry name" value="DNAA INITIATOR-ASSOCIATING PROTEIN DIAA"/>
    <property type="match status" value="1"/>
</dbReference>
<dbReference type="PANTHER" id="PTHR30390">
    <property type="entry name" value="SEDOHEPTULOSE 7-PHOSPHATE ISOMERASE / DNAA INITIATOR-ASSOCIATING FACTOR FOR REPLICATION INITIATION"/>
    <property type="match status" value="1"/>
</dbReference>
<dbReference type="Pfam" id="PF13580">
    <property type="entry name" value="SIS_2"/>
    <property type="match status" value="1"/>
</dbReference>
<dbReference type="SUPFAM" id="SSF53697">
    <property type="entry name" value="SIS domain"/>
    <property type="match status" value="1"/>
</dbReference>
<dbReference type="PROSITE" id="PS51464">
    <property type="entry name" value="SIS"/>
    <property type="match status" value="1"/>
</dbReference>
<organism>
    <name type="scientific">Shigella flexneri</name>
    <dbReference type="NCBI Taxonomy" id="623"/>
    <lineage>
        <taxon>Bacteria</taxon>
        <taxon>Pseudomonadati</taxon>
        <taxon>Pseudomonadota</taxon>
        <taxon>Gammaproteobacteria</taxon>
        <taxon>Enterobacterales</taxon>
        <taxon>Enterobacteriaceae</taxon>
        <taxon>Shigella</taxon>
    </lineage>
</organism>
<sequence>MQERIKACFTESIQTQIAAAEALPDAISRAAMTLVQSLLNGNKILCCGNGTSAANAQHFAASMINRFETERPSLPAIALNTDNVVLTAIANDRLHDEVYAKQVRALGHAGDVLLAISTRGNSRDIVKAVEAAVTRDMTIVALTGYDGGELAGLLGPQDVEIRIPSHRSARIQEMHMLTVNCLCDLIDNTLFPHQDD</sequence>
<gene>
    <name evidence="1" type="primary">diaA</name>
    <name type="ordered locus">SF3190</name>
    <name type="ordered locus">S3407</name>
</gene>
<comment type="function">
    <text evidence="1">Required for the timely initiation of chromosomal replication via direct interactions with the DnaA initiator protein.</text>
</comment>
<comment type="subunit">
    <text evidence="1">Homotetramer; dimer of dimers.</text>
</comment>
<comment type="similarity">
    <text evidence="1">Belongs to the SIS family. DiaA subfamily.</text>
</comment>
<reference key="1">
    <citation type="journal article" date="2002" name="Nucleic Acids Res.">
        <title>Genome sequence of Shigella flexneri 2a: insights into pathogenicity through comparison with genomes of Escherichia coli K12 and O157.</title>
        <authorList>
            <person name="Jin Q."/>
            <person name="Yuan Z."/>
            <person name="Xu J."/>
            <person name="Wang Y."/>
            <person name="Shen Y."/>
            <person name="Lu W."/>
            <person name="Wang J."/>
            <person name="Liu H."/>
            <person name="Yang J."/>
            <person name="Yang F."/>
            <person name="Zhang X."/>
            <person name="Zhang J."/>
            <person name="Yang G."/>
            <person name="Wu H."/>
            <person name="Qu D."/>
            <person name="Dong J."/>
            <person name="Sun L."/>
            <person name="Xue Y."/>
            <person name="Zhao A."/>
            <person name="Gao Y."/>
            <person name="Zhu J."/>
            <person name="Kan B."/>
            <person name="Ding K."/>
            <person name="Chen S."/>
            <person name="Cheng H."/>
            <person name="Yao Z."/>
            <person name="He B."/>
            <person name="Chen R."/>
            <person name="Ma D."/>
            <person name="Qiang B."/>
            <person name="Wen Y."/>
            <person name="Hou Y."/>
            <person name="Yu J."/>
        </authorList>
    </citation>
    <scope>NUCLEOTIDE SEQUENCE [LARGE SCALE GENOMIC DNA]</scope>
    <source>
        <strain>301 / Serotype 2a</strain>
    </source>
</reference>
<reference key="2">
    <citation type="journal article" date="2003" name="Infect. Immun.">
        <title>Complete genome sequence and comparative genomics of Shigella flexneri serotype 2a strain 2457T.</title>
        <authorList>
            <person name="Wei J."/>
            <person name="Goldberg M.B."/>
            <person name="Burland V."/>
            <person name="Venkatesan M.M."/>
            <person name="Deng W."/>
            <person name="Fournier G."/>
            <person name="Mayhew G.F."/>
            <person name="Plunkett G. III"/>
            <person name="Rose D.J."/>
            <person name="Darling A."/>
            <person name="Mau B."/>
            <person name="Perna N.T."/>
            <person name="Payne S.M."/>
            <person name="Runyen-Janecky L.J."/>
            <person name="Zhou S."/>
            <person name="Schwartz D.C."/>
            <person name="Blattner F.R."/>
        </authorList>
    </citation>
    <scope>NUCLEOTIDE SEQUENCE [LARGE SCALE GENOMIC DNA]</scope>
    <source>
        <strain>ATCC 700930 / 2457T / Serotype 2a</strain>
    </source>
</reference>
<keyword id="KW-0235">DNA replication</keyword>
<keyword id="KW-1185">Reference proteome</keyword>
<accession>P66819</accession>
<accession>P45466</accession>
<evidence type="ECO:0000255" key="1">
    <source>
        <dbReference type="HAMAP-Rule" id="MF_01157"/>
    </source>
</evidence>
<protein>
    <recommendedName>
        <fullName evidence="1">DnaA initiator-associating protein DiaA</fullName>
    </recommendedName>
</protein>
<name>DIAA_SHIFL</name>
<feature type="chain" id="PRO_0000136562" description="DnaA initiator-associating protein DiaA">
    <location>
        <begin position="1"/>
        <end position="196"/>
    </location>
</feature>
<feature type="domain" description="SIS" evidence="1">
    <location>
        <begin position="34"/>
        <end position="196"/>
    </location>
</feature>